<keyword id="KW-0010">Activator</keyword>
<keyword id="KW-0963">Cytoplasm</keyword>
<keyword id="KW-0238">DNA-binding</keyword>
<keyword id="KW-0597">Phosphoprotein</keyword>
<keyword id="KW-1185">Reference proteome</keyword>
<keyword id="KW-0678">Repressor</keyword>
<keyword id="KW-0804">Transcription</keyword>
<keyword id="KW-0805">Transcription regulation</keyword>
<keyword id="KW-0902">Two-component regulatory system</keyword>
<keyword id="KW-0843">Virulence</keyword>
<proteinExistence type="inferred from homology"/>
<evidence type="ECO:0000255" key="1">
    <source>
        <dbReference type="PROSITE-ProRule" id="PRU00169"/>
    </source>
</evidence>
<evidence type="ECO:0000255" key="2">
    <source>
        <dbReference type="PROSITE-ProRule" id="PRU01091"/>
    </source>
</evidence>
<evidence type="ECO:0000269" key="3">
    <source>
    </source>
</evidence>
<evidence type="ECO:0000305" key="4"/>
<gene>
    <name type="primary">phoP</name>
    <name type="ordered locus">SF1149</name>
    <name type="ordered locus">S1232</name>
</gene>
<reference key="1">
    <citation type="journal article" date="2002" name="Nucleic Acids Res.">
        <title>Genome sequence of Shigella flexneri 2a: insights into pathogenicity through comparison with genomes of Escherichia coli K12 and O157.</title>
        <authorList>
            <person name="Jin Q."/>
            <person name="Yuan Z."/>
            <person name="Xu J."/>
            <person name="Wang Y."/>
            <person name="Shen Y."/>
            <person name="Lu W."/>
            <person name="Wang J."/>
            <person name="Liu H."/>
            <person name="Yang J."/>
            <person name="Yang F."/>
            <person name="Zhang X."/>
            <person name="Zhang J."/>
            <person name="Yang G."/>
            <person name="Wu H."/>
            <person name="Qu D."/>
            <person name="Dong J."/>
            <person name="Sun L."/>
            <person name="Xue Y."/>
            <person name="Zhao A."/>
            <person name="Gao Y."/>
            <person name="Zhu J."/>
            <person name="Kan B."/>
            <person name="Ding K."/>
            <person name="Chen S."/>
            <person name="Cheng H."/>
            <person name="Yao Z."/>
            <person name="He B."/>
            <person name="Chen R."/>
            <person name="Ma D."/>
            <person name="Qiang B."/>
            <person name="Wen Y."/>
            <person name="Hou Y."/>
            <person name="Yu J."/>
        </authorList>
    </citation>
    <scope>NUCLEOTIDE SEQUENCE [LARGE SCALE GENOMIC DNA]</scope>
    <source>
        <strain>301 / Serotype 2a</strain>
    </source>
</reference>
<reference key="2">
    <citation type="journal article" date="2003" name="Infect. Immun.">
        <title>Complete genome sequence and comparative genomics of Shigella flexneri serotype 2a strain 2457T.</title>
        <authorList>
            <person name="Wei J."/>
            <person name="Goldberg M.B."/>
            <person name="Burland V."/>
            <person name="Venkatesan M.M."/>
            <person name="Deng W."/>
            <person name="Fournier G."/>
            <person name="Mayhew G.F."/>
            <person name="Plunkett G. III"/>
            <person name="Rose D.J."/>
            <person name="Darling A."/>
            <person name="Mau B."/>
            <person name="Perna N.T."/>
            <person name="Payne S.M."/>
            <person name="Runyen-Janecky L.J."/>
            <person name="Zhou S."/>
            <person name="Schwartz D.C."/>
            <person name="Blattner F.R."/>
        </authorList>
    </citation>
    <scope>NUCLEOTIDE SEQUENCE [LARGE SCALE GENOMIC DNA]</scope>
    <source>
        <strain>ATCC 700930 / 2457T / Serotype 2a</strain>
    </source>
</reference>
<reference key="3">
    <citation type="journal article" date="2000" name="Cell. Microbiol.">
        <title>The regulatory protein PhoP controls susceptibility to the host inflammatory response in Shigella flexneri.</title>
        <authorList>
            <person name="Moss J.E."/>
            <person name="Fisher P.E."/>
            <person name="Vick B."/>
            <person name="Groisman E.A."/>
            <person name="Zychlinsky A."/>
        </authorList>
    </citation>
    <scope>FUNCTION</scope>
    <source>
        <strain>M90T / Serotype 5a</strain>
    </source>
</reference>
<feature type="chain" id="PRO_0000081202" description="Virulence transcriptional regulatory protein PhoP">
    <location>
        <begin position="1"/>
        <end position="223"/>
    </location>
</feature>
<feature type="domain" description="Response regulatory" evidence="1">
    <location>
        <begin position="2"/>
        <end position="116"/>
    </location>
</feature>
<feature type="DNA-binding region" description="OmpR/PhoB-type" evidence="2">
    <location>
        <begin position="124"/>
        <end position="222"/>
    </location>
</feature>
<feature type="modified residue" description="4-aspartylphosphate" evidence="1">
    <location>
        <position position="51"/>
    </location>
</feature>
<organism>
    <name type="scientific">Shigella flexneri</name>
    <dbReference type="NCBI Taxonomy" id="623"/>
    <lineage>
        <taxon>Bacteria</taxon>
        <taxon>Pseudomonadati</taxon>
        <taxon>Pseudomonadota</taxon>
        <taxon>Gammaproteobacteria</taxon>
        <taxon>Enterobacterales</taxon>
        <taxon>Enterobacteriaceae</taxon>
        <taxon>Shigella</taxon>
    </lineage>
</organism>
<dbReference type="EMBL" id="AE005674">
    <property type="protein sequence ID" value="AAN42766.1"/>
    <property type="molecule type" value="Genomic_DNA"/>
</dbReference>
<dbReference type="EMBL" id="AE014073">
    <property type="protein sequence ID" value="AAP16655.1"/>
    <property type="molecule type" value="Genomic_DNA"/>
</dbReference>
<dbReference type="RefSeq" id="NP_707059.1">
    <property type="nucleotide sequence ID" value="NC_004337.2"/>
</dbReference>
<dbReference type="RefSeq" id="WP_001265481.1">
    <property type="nucleotide sequence ID" value="NZ_WPGW01000001.1"/>
</dbReference>
<dbReference type="SMR" id="Q83RR0"/>
<dbReference type="STRING" id="198214.SF1149"/>
<dbReference type="PaxDb" id="198214-SF1149"/>
<dbReference type="GeneID" id="1024087"/>
<dbReference type="GeneID" id="93776280"/>
<dbReference type="KEGG" id="sfl:SF1149"/>
<dbReference type="KEGG" id="sfx:S1232"/>
<dbReference type="PATRIC" id="fig|198214.7.peg.1350"/>
<dbReference type="HOGENOM" id="CLU_000445_30_1_6"/>
<dbReference type="Proteomes" id="UP000001006">
    <property type="component" value="Chromosome"/>
</dbReference>
<dbReference type="Proteomes" id="UP000002673">
    <property type="component" value="Chromosome"/>
</dbReference>
<dbReference type="GO" id="GO:0005829">
    <property type="term" value="C:cytosol"/>
    <property type="evidence" value="ECO:0007669"/>
    <property type="project" value="TreeGrafter"/>
</dbReference>
<dbReference type="GO" id="GO:0032993">
    <property type="term" value="C:protein-DNA complex"/>
    <property type="evidence" value="ECO:0007669"/>
    <property type="project" value="TreeGrafter"/>
</dbReference>
<dbReference type="GO" id="GO:0000156">
    <property type="term" value="F:phosphorelay response regulator activity"/>
    <property type="evidence" value="ECO:0007669"/>
    <property type="project" value="TreeGrafter"/>
</dbReference>
<dbReference type="GO" id="GO:0000976">
    <property type="term" value="F:transcription cis-regulatory region binding"/>
    <property type="evidence" value="ECO:0007669"/>
    <property type="project" value="TreeGrafter"/>
</dbReference>
<dbReference type="GO" id="GO:0006355">
    <property type="term" value="P:regulation of DNA-templated transcription"/>
    <property type="evidence" value="ECO:0007669"/>
    <property type="project" value="InterPro"/>
</dbReference>
<dbReference type="CDD" id="cd19934">
    <property type="entry name" value="REC_OmpR_EcPhoP-like"/>
    <property type="match status" value="1"/>
</dbReference>
<dbReference type="CDD" id="cd00383">
    <property type="entry name" value="trans_reg_C"/>
    <property type="match status" value="1"/>
</dbReference>
<dbReference type="FunFam" id="3.40.50.2300:FF:000002">
    <property type="entry name" value="DNA-binding response regulator PhoP"/>
    <property type="match status" value="1"/>
</dbReference>
<dbReference type="FunFam" id="1.10.10.10:FF:000098">
    <property type="entry name" value="Two-component system response regulator PhoP"/>
    <property type="match status" value="1"/>
</dbReference>
<dbReference type="Gene3D" id="3.40.50.2300">
    <property type="match status" value="1"/>
</dbReference>
<dbReference type="Gene3D" id="6.10.250.690">
    <property type="match status" value="1"/>
</dbReference>
<dbReference type="Gene3D" id="1.10.10.10">
    <property type="entry name" value="Winged helix-like DNA-binding domain superfamily/Winged helix DNA-binding domain"/>
    <property type="match status" value="1"/>
</dbReference>
<dbReference type="InterPro" id="IPR011006">
    <property type="entry name" value="CheY-like_superfamily"/>
</dbReference>
<dbReference type="InterPro" id="IPR001867">
    <property type="entry name" value="OmpR/PhoB-type_DNA-bd"/>
</dbReference>
<dbReference type="InterPro" id="IPR001789">
    <property type="entry name" value="Sig_transdc_resp-reg_receiver"/>
</dbReference>
<dbReference type="InterPro" id="IPR039420">
    <property type="entry name" value="WalR-like"/>
</dbReference>
<dbReference type="InterPro" id="IPR036388">
    <property type="entry name" value="WH-like_DNA-bd_sf"/>
</dbReference>
<dbReference type="NCBIfam" id="NF008078">
    <property type="entry name" value="PRK10816.1"/>
    <property type="match status" value="1"/>
</dbReference>
<dbReference type="PANTHER" id="PTHR48111">
    <property type="entry name" value="REGULATOR OF RPOS"/>
    <property type="match status" value="1"/>
</dbReference>
<dbReference type="PANTHER" id="PTHR48111:SF71">
    <property type="entry name" value="TRANSCRIPTIONAL REGULATORY PROTEIN PHOP"/>
    <property type="match status" value="1"/>
</dbReference>
<dbReference type="Pfam" id="PF00072">
    <property type="entry name" value="Response_reg"/>
    <property type="match status" value="1"/>
</dbReference>
<dbReference type="Pfam" id="PF00486">
    <property type="entry name" value="Trans_reg_C"/>
    <property type="match status" value="1"/>
</dbReference>
<dbReference type="SMART" id="SM00448">
    <property type="entry name" value="REC"/>
    <property type="match status" value="1"/>
</dbReference>
<dbReference type="SMART" id="SM00862">
    <property type="entry name" value="Trans_reg_C"/>
    <property type="match status" value="1"/>
</dbReference>
<dbReference type="SUPFAM" id="SSF52172">
    <property type="entry name" value="CheY-like"/>
    <property type="match status" value="1"/>
</dbReference>
<dbReference type="PROSITE" id="PS51755">
    <property type="entry name" value="OMPR_PHOB"/>
    <property type="match status" value="1"/>
</dbReference>
<dbReference type="PROSITE" id="PS50110">
    <property type="entry name" value="RESPONSE_REGULATORY"/>
    <property type="match status" value="1"/>
</dbReference>
<protein>
    <recommendedName>
        <fullName>Virulence transcriptional regulatory protein PhoP</fullName>
    </recommendedName>
</protein>
<sequence length="223" mass="25535">MRVLVVEDNALLRHHLKVQIQDAGHQVDDAEDAKEADYYLNEHLPDIAIVDLGLPDEDGLSLIRRWRSNDVSLPILVLTARESWQDKVEVLSAGADDYVTKPFHIEEVMARMQALMRRNSGLASQVISLPPFQVDLSRRELSINDEVIKLTAFEYTIMETLIRNNGKVVSKDSLMLQLYPDAELRESHTIDVLMGRLRKKIQAQYPQEVITTVRGQGYLFELR</sequence>
<accession>Q83RR0</accession>
<accession>Q7C202</accession>
<comment type="function">
    <text evidence="3">Member of the two-component regulatory system PhoQ/PhoP involved in virulence and adaptation to low Mg(2+) environments. Necessary for resistance to killing by polymorphonuclear leukocytes (PMNs) and cationic antimicrobial peptides (CAMP) they produce.</text>
</comment>
<comment type="subcellular location">
    <subcellularLocation>
        <location evidence="4">Cytoplasm</location>
    </subcellularLocation>
</comment>
<comment type="PTM">
    <text evidence="4">Phosphorylated by PhoQ.</text>
</comment>
<name>PHOP_SHIFL</name>